<proteinExistence type="inferred from homology"/>
<protein>
    <recommendedName>
        <fullName evidence="1">L-threonine 3-dehydrogenase</fullName>
        <shortName evidence="1">TDH</shortName>
        <ecNumber evidence="1">1.1.1.103</ecNumber>
    </recommendedName>
</protein>
<dbReference type="EC" id="1.1.1.103" evidence="1"/>
<dbReference type="EMBL" id="CP000950">
    <property type="protein sequence ID" value="ACA70403.1"/>
    <property type="molecule type" value="Genomic_DNA"/>
</dbReference>
<dbReference type="RefSeq" id="WP_011191451.1">
    <property type="nucleotide sequence ID" value="NZ_CP009792.1"/>
</dbReference>
<dbReference type="SMR" id="B1JQW2"/>
<dbReference type="GeneID" id="96663541"/>
<dbReference type="KEGG" id="ypy:YPK_4144"/>
<dbReference type="PATRIC" id="fig|502800.11.peg.495"/>
<dbReference type="UniPathway" id="UPA00046">
    <property type="reaction ID" value="UER00505"/>
</dbReference>
<dbReference type="GO" id="GO:0005737">
    <property type="term" value="C:cytoplasm"/>
    <property type="evidence" value="ECO:0007669"/>
    <property type="project" value="UniProtKB-SubCell"/>
</dbReference>
<dbReference type="GO" id="GO:0008743">
    <property type="term" value="F:L-threonine 3-dehydrogenase activity"/>
    <property type="evidence" value="ECO:0007669"/>
    <property type="project" value="UniProtKB-UniRule"/>
</dbReference>
<dbReference type="GO" id="GO:0008270">
    <property type="term" value="F:zinc ion binding"/>
    <property type="evidence" value="ECO:0007669"/>
    <property type="project" value="UniProtKB-UniRule"/>
</dbReference>
<dbReference type="GO" id="GO:0019518">
    <property type="term" value="P:L-threonine catabolic process to glycine"/>
    <property type="evidence" value="ECO:0007669"/>
    <property type="project" value="UniProtKB-UniPathway"/>
</dbReference>
<dbReference type="FunFam" id="3.40.50.720:FF:000059">
    <property type="entry name" value="L-threonine 3-dehydrogenase"/>
    <property type="match status" value="1"/>
</dbReference>
<dbReference type="Gene3D" id="3.90.180.10">
    <property type="entry name" value="Medium-chain alcohol dehydrogenases, catalytic domain"/>
    <property type="match status" value="1"/>
</dbReference>
<dbReference type="Gene3D" id="3.40.50.720">
    <property type="entry name" value="NAD(P)-binding Rossmann-like Domain"/>
    <property type="match status" value="1"/>
</dbReference>
<dbReference type="HAMAP" id="MF_00627">
    <property type="entry name" value="Thr_dehydrog"/>
    <property type="match status" value="1"/>
</dbReference>
<dbReference type="InterPro" id="IPR013149">
    <property type="entry name" value="ADH-like_C"/>
</dbReference>
<dbReference type="InterPro" id="IPR013154">
    <property type="entry name" value="ADH-like_N"/>
</dbReference>
<dbReference type="InterPro" id="IPR002328">
    <property type="entry name" value="ADH_Zn_CS"/>
</dbReference>
<dbReference type="InterPro" id="IPR011032">
    <property type="entry name" value="GroES-like_sf"/>
</dbReference>
<dbReference type="InterPro" id="IPR004627">
    <property type="entry name" value="L-Threonine_3-DHase"/>
</dbReference>
<dbReference type="InterPro" id="IPR036291">
    <property type="entry name" value="NAD(P)-bd_dom_sf"/>
</dbReference>
<dbReference type="InterPro" id="IPR020843">
    <property type="entry name" value="PKS_ER"/>
</dbReference>
<dbReference type="InterPro" id="IPR050129">
    <property type="entry name" value="Zn_alcohol_dh"/>
</dbReference>
<dbReference type="NCBIfam" id="NF003808">
    <property type="entry name" value="PRK05396.1"/>
    <property type="match status" value="1"/>
</dbReference>
<dbReference type="NCBIfam" id="TIGR00692">
    <property type="entry name" value="tdh"/>
    <property type="match status" value="1"/>
</dbReference>
<dbReference type="PANTHER" id="PTHR43401">
    <property type="entry name" value="L-THREONINE 3-DEHYDROGENASE"/>
    <property type="match status" value="1"/>
</dbReference>
<dbReference type="PANTHER" id="PTHR43401:SF2">
    <property type="entry name" value="L-THREONINE 3-DEHYDROGENASE"/>
    <property type="match status" value="1"/>
</dbReference>
<dbReference type="Pfam" id="PF08240">
    <property type="entry name" value="ADH_N"/>
    <property type="match status" value="1"/>
</dbReference>
<dbReference type="Pfam" id="PF00107">
    <property type="entry name" value="ADH_zinc_N"/>
    <property type="match status" value="1"/>
</dbReference>
<dbReference type="SMART" id="SM00829">
    <property type="entry name" value="PKS_ER"/>
    <property type="match status" value="1"/>
</dbReference>
<dbReference type="SUPFAM" id="SSF50129">
    <property type="entry name" value="GroES-like"/>
    <property type="match status" value="1"/>
</dbReference>
<dbReference type="SUPFAM" id="SSF51735">
    <property type="entry name" value="NAD(P)-binding Rossmann-fold domains"/>
    <property type="match status" value="1"/>
</dbReference>
<dbReference type="PROSITE" id="PS00059">
    <property type="entry name" value="ADH_ZINC"/>
    <property type="match status" value="1"/>
</dbReference>
<accession>B1JQW2</accession>
<sequence>MKALSKLKAEEGIWMTDVPQPELGHNDIMIKIRKTAICGTDVHIYNWDEWSQKTIPVPMVVGHEYVGEVVAIGQEVKGFNIGDRVSGEGHITCGHCRNCRGGRTHLCRNTVGVGVNRPGSFAEYLVIPAFNAFKIPDNISDELAAIFDPFGNAVHTALSFDLVGEDVLVSGAGPIGIMAAAVCKHVGARHVVITDVNEYRLDLARKMGVTRAVNVSKENLNDVMTELGMTEGFDVGLEMSGAPPAFRSLLNSMNHGGRIAMLGIPPSDMSIDWNQVIFKGLFIKGIYGREMFETWYKMAALIQSGLDLTPIITHRFPIDEFQQGFDAMRSGKSGKVVLSWD</sequence>
<keyword id="KW-0963">Cytoplasm</keyword>
<keyword id="KW-0479">Metal-binding</keyword>
<keyword id="KW-0520">NAD</keyword>
<keyword id="KW-0560">Oxidoreductase</keyword>
<keyword id="KW-0862">Zinc</keyword>
<organism>
    <name type="scientific">Yersinia pseudotuberculosis serotype O:3 (strain YPIII)</name>
    <dbReference type="NCBI Taxonomy" id="502800"/>
    <lineage>
        <taxon>Bacteria</taxon>
        <taxon>Pseudomonadati</taxon>
        <taxon>Pseudomonadota</taxon>
        <taxon>Gammaproteobacteria</taxon>
        <taxon>Enterobacterales</taxon>
        <taxon>Yersiniaceae</taxon>
        <taxon>Yersinia</taxon>
    </lineage>
</organism>
<comment type="function">
    <text evidence="1">Catalyzes the NAD(+)-dependent oxidation of L-threonine to 2-amino-3-ketobutyrate.</text>
</comment>
<comment type="catalytic activity">
    <reaction evidence="1">
        <text>L-threonine + NAD(+) = (2S)-2-amino-3-oxobutanoate + NADH + H(+)</text>
        <dbReference type="Rhea" id="RHEA:13161"/>
        <dbReference type="ChEBI" id="CHEBI:15378"/>
        <dbReference type="ChEBI" id="CHEBI:57540"/>
        <dbReference type="ChEBI" id="CHEBI:57926"/>
        <dbReference type="ChEBI" id="CHEBI:57945"/>
        <dbReference type="ChEBI" id="CHEBI:78948"/>
        <dbReference type="EC" id="1.1.1.103"/>
    </reaction>
</comment>
<comment type="cofactor">
    <cofactor evidence="1">
        <name>Zn(2+)</name>
        <dbReference type="ChEBI" id="CHEBI:29105"/>
    </cofactor>
    <text evidence="1">Binds 2 Zn(2+) ions per subunit.</text>
</comment>
<comment type="pathway">
    <text evidence="1">Amino-acid degradation; L-threonine degradation via oxydo-reductase pathway; glycine from L-threonine: step 1/2.</text>
</comment>
<comment type="subunit">
    <text evidence="1">Homotetramer.</text>
</comment>
<comment type="subcellular location">
    <subcellularLocation>
        <location evidence="1">Cytoplasm</location>
    </subcellularLocation>
</comment>
<comment type="similarity">
    <text evidence="1">Belongs to the zinc-containing alcohol dehydrogenase family.</text>
</comment>
<gene>
    <name evidence="1" type="primary">tdh</name>
    <name type="ordered locus">YPK_4144</name>
</gene>
<name>TDH_YERPY</name>
<feature type="chain" id="PRO_1000130575" description="L-threonine 3-dehydrogenase">
    <location>
        <begin position="1"/>
        <end position="341"/>
    </location>
</feature>
<feature type="active site" description="Charge relay system" evidence="1">
    <location>
        <position position="40"/>
    </location>
</feature>
<feature type="active site" description="Charge relay system" evidence="1">
    <location>
        <position position="43"/>
    </location>
</feature>
<feature type="binding site" evidence="1">
    <location>
        <position position="38"/>
    </location>
    <ligand>
        <name>Zn(2+)</name>
        <dbReference type="ChEBI" id="CHEBI:29105"/>
        <label>1</label>
        <note>catalytic</note>
    </ligand>
</feature>
<feature type="binding site" evidence="1">
    <location>
        <position position="63"/>
    </location>
    <ligand>
        <name>Zn(2+)</name>
        <dbReference type="ChEBI" id="CHEBI:29105"/>
        <label>1</label>
        <note>catalytic</note>
    </ligand>
</feature>
<feature type="binding site" evidence="1">
    <location>
        <position position="64"/>
    </location>
    <ligand>
        <name>Zn(2+)</name>
        <dbReference type="ChEBI" id="CHEBI:29105"/>
        <label>1</label>
        <note>catalytic</note>
    </ligand>
</feature>
<feature type="binding site" evidence="1">
    <location>
        <position position="93"/>
    </location>
    <ligand>
        <name>Zn(2+)</name>
        <dbReference type="ChEBI" id="CHEBI:29105"/>
        <label>2</label>
    </ligand>
</feature>
<feature type="binding site" evidence="1">
    <location>
        <position position="96"/>
    </location>
    <ligand>
        <name>Zn(2+)</name>
        <dbReference type="ChEBI" id="CHEBI:29105"/>
        <label>2</label>
    </ligand>
</feature>
<feature type="binding site" evidence="1">
    <location>
        <position position="99"/>
    </location>
    <ligand>
        <name>Zn(2+)</name>
        <dbReference type="ChEBI" id="CHEBI:29105"/>
        <label>2</label>
    </ligand>
</feature>
<feature type="binding site" evidence="1">
    <location>
        <position position="107"/>
    </location>
    <ligand>
        <name>Zn(2+)</name>
        <dbReference type="ChEBI" id="CHEBI:29105"/>
        <label>2</label>
    </ligand>
</feature>
<feature type="binding site" evidence="1">
    <location>
        <position position="175"/>
    </location>
    <ligand>
        <name>NAD(+)</name>
        <dbReference type="ChEBI" id="CHEBI:57540"/>
    </ligand>
</feature>
<feature type="binding site" evidence="1">
    <location>
        <position position="195"/>
    </location>
    <ligand>
        <name>NAD(+)</name>
        <dbReference type="ChEBI" id="CHEBI:57540"/>
    </ligand>
</feature>
<feature type="binding site" evidence="1">
    <location>
        <position position="200"/>
    </location>
    <ligand>
        <name>NAD(+)</name>
        <dbReference type="ChEBI" id="CHEBI:57540"/>
    </ligand>
</feature>
<feature type="binding site" evidence="1">
    <location>
        <begin position="262"/>
        <end position="264"/>
    </location>
    <ligand>
        <name>NAD(+)</name>
        <dbReference type="ChEBI" id="CHEBI:57540"/>
    </ligand>
</feature>
<feature type="binding site" evidence="1">
    <location>
        <begin position="286"/>
        <end position="287"/>
    </location>
    <ligand>
        <name>NAD(+)</name>
        <dbReference type="ChEBI" id="CHEBI:57540"/>
    </ligand>
</feature>
<feature type="site" description="Important for catalytic activity for the proton relay mechanism but does not participate directly in the coordination of zinc atom" evidence="1">
    <location>
        <position position="148"/>
    </location>
</feature>
<reference key="1">
    <citation type="submission" date="2008-02" db="EMBL/GenBank/DDBJ databases">
        <title>Complete sequence of Yersinia pseudotuberculosis YPIII.</title>
        <authorList>
            <consortium name="US DOE Joint Genome Institute"/>
            <person name="Copeland A."/>
            <person name="Lucas S."/>
            <person name="Lapidus A."/>
            <person name="Glavina del Rio T."/>
            <person name="Dalin E."/>
            <person name="Tice H."/>
            <person name="Bruce D."/>
            <person name="Goodwin L."/>
            <person name="Pitluck S."/>
            <person name="Munk A.C."/>
            <person name="Brettin T."/>
            <person name="Detter J.C."/>
            <person name="Han C."/>
            <person name="Tapia R."/>
            <person name="Schmutz J."/>
            <person name="Larimer F."/>
            <person name="Land M."/>
            <person name="Hauser L."/>
            <person name="Challacombe J.F."/>
            <person name="Green L."/>
            <person name="Lindler L.E."/>
            <person name="Nikolich M.P."/>
            <person name="Richardson P."/>
        </authorList>
    </citation>
    <scope>NUCLEOTIDE SEQUENCE [LARGE SCALE GENOMIC DNA]</scope>
    <source>
        <strain>YPIII</strain>
    </source>
</reference>
<evidence type="ECO:0000255" key="1">
    <source>
        <dbReference type="HAMAP-Rule" id="MF_00627"/>
    </source>
</evidence>